<dbReference type="EMBL" id="AJ006456">
    <property type="protein sequence ID" value="CAA07032.1"/>
    <property type="molecule type" value="Genomic_DNA"/>
</dbReference>
<dbReference type="RefSeq" id="WP_126604699.1">
    <property type="nucleotide sequence ID" value="NZ_AP018795.1"/>
</dbReference>
<dbReference type="PDB" id="1H1O">
    <property type="method" value="X-ray"/>
    <property type="resolution" value="2.13 A"/>
    <property type="chains" value="A/B=48-230"/>
</dbReference>
<dbReference type="PDBsum" id="1H1O"/>
<dbReference type="SMR" id="P74917"/>
<dbReference type="BioCyc" id="MetaCyc:MONOMER-16160"/>
<dbReference type="EvolutionaryTrace" id="P74917"/>
<dbReference type="GO" id="GO:0042597">
    <property type="term" value="C:periplasmic space"/>
    <property type="evidence" value="ECO:0007669"/>
    <property type="project" value="UniProtKB-SubCell"/>
</dbReference>
<dbReference type="GO" id="GO:0009055">
    <property type="term" value="F:electron transfer activity"/>
    <property type="evidence" value="ECO:0007669"/>
    <property type="project" value="InterPro"/>
</dbReference>
<dbReference type="GO" id="GO:0020037">
    <property type="term" value="F:heme binding"/>
    <property type="evidence" value="ECO:0007669"/>
    <property type="project" value="InterPro"/>
</dbReference>
<dbReference type="GO" id="GO:0005506">
    <property type="term" value="F:iron ion binding"/>
    <property type="evidence" value="ECO:0007669"/>
    <property type="project" value="InterPro"/>
</dbReference>
<dbReference type="Gene3D" id="1.10.760.10">
    <property type="entry name" value="Cytochrome c-like domain"/>
    <property type="match status" value="2"/>
</dbReference>
<dbReference type="InterPro" id="IPR009056">
    <property type="entry name" value="Cyt_c-like_dom"/>
</dbReference>
<dbReference type="InterPro" id="IPR036909">
    <property type="entry name" value="Cyt_c-like_dom_sf"/>
</dbReference>
<dbReference type="InterPro" id="IPR024167">
    <property type="entry name" value="Cytochrome_c4-like"/>
</dbReference>
<dbReference type="InterPro" id="IPR050597">
    <property type="entry name" value="Cytochrome_c_Oxidase_Subunit"/>
</dbReference>
<dbReference type="PANTHER" id="PTHR33751">
    <property type="entry name" value="CBB3-TYPE CYTOCHROME C OXIDASE SUBUNIT FIXP"/>
    <property type="match status" value="1"/>
</dbReference>
<dbReference type="PANTHER" id="PTHR33751:SF9">
    <property type="entry name" value="CYTOCHROME C4"/>
    <property type="match status" value="1"/>
</dbReference>
<dbReference type="Pfam" id="PF00034">
    <property type="entry name" value="Cytochrom_C"/>
    <property type="match status" value="2"/>
</dbReference>
<dbReference type="PIRSF" id="PIRSF000005">
    <property type="entry name" value="Cytochrome_c4"/>
    <property type="match status" value="1"/>
</dbReference>
<dbReference type="SUPFAM" id="SSF46626">
    <property type="entry name" value="Cytochrome c"/>
    <property type="match status" value="2"/>
</dbReference>
<dbReference type="PROSITE" id="PS51007">
    <property type="entry name" value="CYTC"/>
    <property type="match status" value="2"/>
</dbReference>
<proteinExistence type="evidence at protein level"/>
<sequence>MTTYLSQDRLRNKENDTMTYQHSKMYQSRTFLLFSALLLVAGQASAAVGSADAPAPYRVSSDCMVCHGMTGRDTLYPIVPRLAGQHKSYMEAQLKAYKDHSRADQNGEIYMWPVAQALDSAKITALADYFNAQKPPMQSSGIKHAGAKEGKAIFNQGVTNEQIPACMECHGSDGQGAGPFPRLAGQRYGYIIQQLTYFHNGTRVNTLMNQIAKNITVAQMKDVAAYLSSL</sequence>
<reference key="1">
    <citation type="submission" date="2001-08" db="EMBL/GenBank/DDBJ databases">
        <authorList>
            <person name="Appia C."/>
            <person name="Bengrine A."/>
            <person name="Chippaux M."/>
            <person name="Cavazza C."/>
            <person name="Bruschi M."/>
            <person name="Bonnefoy V."/>
        </authorList>
    </citation>
    <scope>NUCLEOTIDE SEQUENCE [GENOMIC DNA]</scope>
    <source>
        <strain>ATCC 33020 / DSM 29468 / JCM 18981 / 11Fe</strain>
    </source>
</reference>
<reference key="2">
    <citation type="journal article" date="1996" name="Eur. J. Biochem.">
        <title>Characterisation of a soluble cytochrome c4 isolated from Thiobacillus ferrooxidans.</title>
        <authorList>
            <person name="Cavazza C."/>
            <person name="Giudici-Orticoni M.-T."/>
            <person name="Nitschke W."/>
            <person name="Appia C."/>
            <person name="Bonnefoy V."/>
            <person name="Bruschi M."/>
        </authorList>
    </citation>
    <scope>PROTEIN SEQUENCE OF 48-95</scope>
    <scope>MASS SPECTROMETRY</scope>
    <scope>CHARACTERIZATION</scope>
</reference>
<gene>
    <name type="primary">cyc1</name>
</gene>
<comment type="function">
    <text>Diheme, high potential cytochrome c.</text>
</comment>
<comment type="biophysicochemical properties">
    <redoxPotential>
        <text>E(0) are +385 +/- 20 mV and +480 +/- 20 mV.</text>
    </redoxPotential>
</comment>
<comment type="subcellular location">
    <subcellularLocation>
        <location>Periplasm</location>
    </subcellularLocation>
</comment>
<comment type="PTM">
    <text>Binds 2 heme c groups covalently per subunit.</text>
</comment>
<comment type="mass spectrometry"/>
<keyword id="KW-0002">3D-structure</keyword>
<keyword id="KW-0903">Direct protein sequencing</keyword>
<keyword id="KW-0249">Electron transport</keyword>
<keyword id="KW-0349">Heme</keyword>
<keyword id="KW-0408">Iron</keyword>
<keyword id="KW-0479">Metal-binding</keyword>
<keyword id="KW-0574">Periplasm</keyword>
<keyword id="KW-0732">Signal</keyword>
<keyword id="KW-0813">Transport</keyword>
<name>CY552_ACIFI</name>
<feature type="signal peptide" evidence="2">
    <location>
        <begin position="1"/>
        <end position="47"/>
    </location>
</feature>
<feature type="chain" id="PRO_0000006534" description="Cytochrome c-552">
    <location>
        <begin position="48"/>
        <end position="230"/>
    </location>
</feature>
<feature type="binding site" description="covalent" evidence="1">
    <location>
        <position position="63"/>
    </location>
    <ligand>
        <name>heme c</name>
        <dbReference type="ChEBI" id="CHEBI:61717"/>
        <label>1</label>
    </ligand>
</feature>
<feature type="binding site" description="covalent" evidence="1">
    <location>
        <position position="66"/>
    </location>
    <ligand>
        <name>heme c</name>
        <dbReference type="ChEBI" id="CHEBI:61717"/>
        <label>1</label>
    </ligand>
</feature>
<feature type="binding site" description="axial binding residue" evidence="1">
    <location>
        <position position="67"/>
    </location>
    <ligand>
        <name>heme c</name>
        <dbReference type="ChEBI" id="CHEBI:61717"/>
        <label>1</label>
    </ligand>
    <ligandPart>
        <name>Fe</name>
        <dbReference type="ChEBI" id="CHEBI:18248"/>
    </ligandPart>
</feature>
<feature type="binding site" description="covalent" evidence="1">
    <location>
        <position position="166"/>
    </location>
    <ligand>
        <name>heme c</name>
        <dbReference type="ChEBI" id="CHEBI:61717"/>
        <label>2</label>
    </ligand>
</feature>
<feature type="binding site" description="covalent" evidence="1">
    <location>
        <position position="169"/>
    </location>
    <ligand>
        <name>heme c</name>
        <dbReference type="ChEBI" id="CHEBI:61717"/>
        <label>2</label>
    </ligand>
</feature>
<feature type="binding site" description="axial binding residue" evidence="1">
    <location>
        <position position="170"/>
    </location>
    <ligand>
        <name>heme c</name>
        <dbReference type="ChEBI" id="CHEBI:61717"/>
        <label>2</label>
    </ligand>
    <ligandPart>
        <name>Fe</name>
        <dbReference type="ChEBI" id="CHEBI:18248"/>
    </ligandPart>
</feature>
<feature type="sequence conflict" description="In Ref. 2; AA sequence." evidence="3" ref="2">
    <original>Y</original>
    <variation>YI</variation>
    <location>
        <position position="89"/>
    </location>
</feature>
<feature type="helix" evidence="4">
    <location>
        <begin position="60"/>
        <end position="62"/>
    </location>
</feature>
<feature type="helix" evidence="4">
    <location>
        <begin position="64"/>
        <end position="67"/>
    </location>
</feature>
<feature type="helix" evidence="4">
    <location>
        <begin position="87"/>
        <end position="98"/>
    </location>
</feature>
<feature type="helix" evidence="4">
    <location>
        <begin position="105"/>
        <end position="110"/>
    </location>
</feature>
<feature type="helix" evidence="4">
    <location>
        <begin position="112"/>
        <end position="116"/>
    </location>
</feature>
<feature type="helix" evidence="4">
    <location>
        <begin position="120"/>
        <end position="132"/>
    </location>
</feature>
<feature type="helix" evidence="4">
    <location>
        <begin position="147"/>
        <end position="156"/>
    </location>
</feature>
<feature type="helix" evidence="4">
    <location>
        <begin position="159"/>
        <end position="161"/>
    </location>
</feature>
<feature type="helix" evidence="4">
    <location>
        <begin position="167"/>
        <end position="170"/>
    </location>
</feature>
<feature type="helix" evidence="4">
    <location>
        <begin position="188"/>
        <end position="200"/>
    </location>
</feature>
<feature type="strand" evidence="4">
    <location>
        <begin position="201"/>
        <end position="203"/>
    </location>
</feature>
<feature type="helix" evidence="4">
    <location>
        <begin position="206"/>
        <end position="212"/>
    </location>
</feature>
<feature type="helix" evidence="4">
    <location>
        <begin position="217"/>
        <end position="229"/>
    </location>
</feature>
<organism>
    <name type="scientific">Acidithiobacillus ferridurans</name>
    <dbReference type="NCBI Taxonomy" id="1232575"/>
    <lineage>
        <taxon>Bacteria</taxon>
        <taxon>Pseudomonadati</taxon>
        <taxon>Pseudomonadota</taxon>
        <taxon>Acidithiobacillia</taxon>
        <taxon>Acidithiobacillales</taxon>
        <taxon>Acidithiobacillaceae</taxon>
        <taxon>Acidithiobacillus</taxon>
    </lineage>
</organism>
<protein>
    <recommendedName>
        <fullName>Cytochrome c-552</fullName>
    </recommendedName>
    <alternativeName>
        <fullName>Cytochrome c552</fullName>
    </alternativeName>
</protein>
<accession>P74917</accession>
<evidence type="ECO:0000255" key="1">
    <source>
        <dbReference type="PROSITE-ProRule" id="PRU00433"/>
    </source>
</evidence>
<evidence type="ECO:0000269" key="2">
    <source>
    </source>
</evidence>
<evidence type="ECO:0000305" key="3"/>
<evidence type="ECO:0007829" key="4">
    <source>
        <dbReference type="PDB" id="1H1O"/>
    </source>
</evidence>